<protein>
    <recommendedName>
        <fullName>Conotoxin AbVIG</fullName>
    </recommendedName>
</protein>
<proteinExistence type="evidence at transcript level"/>
<organism>
    <name type="scientific">Conus abbreviatus</name>
    <name type="common">Abbreviated cone</name>
    <name type="synonym">Miliariconus abbreviatus</name>
    <dbReference type="NCBI Taxonomy" id="100123"/>
    <lineage>
        <taxon>Eukaryota</taxon>
        <taxon>Metazoa</taxon>
        <taxon>Spiralia</taxon>
        <taxon>Lophotrochozoa</taxon>
        <taxon>Mollusca</taxon>
        <taxon>Gastropoda</taxon>
        <taxon>Caenogastropoda</taxon>
        <taxon>Neogastropoda</taxon>
        <taxon>Conoidea</taxon>
        <taxon>Conidae</taxon>
        <taxon>Conus</taxon>
        <taxon>Virroconus</taxon>
    </lineage>
</organism>
<sequence length="71" mass="7645">VLIIAVLFLTACQLTTAETSSRGKQKHRALRSTDKNSRMTKRCTAPGGACYAAYTCCSNACNLNTKKCVLS</sequence>
<feature type="signal peptide" evidence="2">
    <location>
        <begin position="1" status="less than"/>
        <end position="17"/>
    </location>
</feature>
<feature type="propeptide" id="PRO_0000392122" evidence="1">
    <location>
        <begin position="18"/>
        <end position="40"/>
    </location>
</feature>
<feature type="peptide" id="PRO_0000392123" description="Conotoxin AbVIG">
    <location>
        <begin position="43"/>
        <end position="71"/>
    </location>
</feature>
<feature type="disulfide bond" evidence="1">
    <location>
        <begin position="43"/>
        <end position="57"/>
    </location>
</feature>
<feature type="disulfide bond" evidence="1">
    <location>
        <begin position="50"/>
        <end position="61"/>
    </location>
</feature>
<feature type="disulfide bond" evidence="1">
    <location>
        <begin position="56"/>
        <end position="68"/>
    </location>
</feature>
<feature type="sequence conflict" description="In Ref. 1 and 2; AAD48258." evidence="3" ref="1 2">
    <original>Q</original>
    <variation>L</variation>
    <location>
        <position position="13"/>
    </location>
</feature>
<feature type="sequence conflict" description="In Ref. 1 and 2; AAD48250." evidence="3" ref="1 2">
    <original>L</original>
    <variation>H</variation>
    <location>
        <position position="14"/>
    </location>
</feature>
<feature type="sequence conflict" description="In Ref. 1 and 2; AAD48259." evidence="3" ref="1 2">
    <original>T</original>
    <variation>A</variation>
    <location>
        <position position="15"/>
    </location>
</feature>
<feature type="sequence conflict" description="In Ref. 1 and 2; AAD48258." evidence="3" ref="1 2">
    <original>E</original>
    <variation>V</variation>
    <location>
        <position position="18"/>
    </location>
</feature>
<feature type="sequence conflict" description="In Ref. 1 and 2; AAD48259." evidence="3" ref="1 2">
    <original>N</original>
    <variation>T</variation>
    <location>
        <position position="36"/>
    </location>
</feature>
<feature type="sequence conflict" description="In Ref. 1 and 2; AAD48259." evidence="3" ref="1 2">
    <original>K</original>
    <variation>N</variation>
    <location>
        <position position="41"/>
    </location>
</feature>
<feature type="sequence conflict" description="In Ref. 1 and 2; AAD48257." evidence="3" ref="1 2">
    <original>AY</original>
    <variation>DN</variation>
    <location>
        <begin position="53"/>
        <end position="54"/>
    </location>
</feature>
<feature type="non-terminal residue">
    <location>
        <position position="1"/>
    </location>
</feature>
<reference key="1">
    <citation type="journal article" date="1999" name="Proc. Natl. Acad. Sci. U.S.A.">
        <title>Molecular genetics of ecological diversification: duplication and rapid evolution of toxin genes of the venomous gastropod Conus.</title>
        <authorList>
            <person name="Duda T.F. Jr."/>
            <person name="Palumbi S.R."/>
        </authorList>
    </citation>
    <scope>NUCLEOTIDE SEQUENCE [MRNA]</scope>
    <source>
        <tissue>Venom duct</tissue>
    </source>
</reference>
<reference key="2">
    <citation type="journal article" date="2004" name="Proc. R. Soc. B">
        <title>Gene expression and feeding ecology: evolution of piscivory in the venomous gastropod genus Conus.</title>
        <authorList>
            <person name="Duda T.F. Jr."/>
            <person name="Palumbi S.R."/>
        </authorList>
    </citation>
    <scope>NUCLEOTIDE SEQUENCE [MRNA]</scope>
    <source>
        <tissue>Venom duct</tissue>
    </source>
</reference>
<name>O16G_CONAB</name>
<dbReference type="EMBL" id="AF089997">
    <property type="protein sequence ID" value="AAD48251.1"/>
    <property type="molecule type" value="mRNA"/>
</dbReference>
<dbReference type="EMBL" id="AF089998">
    <property type="protein sequence ID" value="AAD48252.1"/>
    <property type="molecule type" value="mRNA"/>
</dbReference>
<dbReference type="EMBL" id="AF089999">
    <property type="protein sequence ID" value="AAD48253.1"/>
    <property type="molecule type" value="mRNA"/>
</dbReference>
<dbReference type="EMBL" id="AF090000">
    <property type="protein sequence ID" value="AAD48254.1"/>
    <property type="molecule type" value="mRNA"/>
</dbReference>
<dbReference type="EMBL" id="AF090001">
    <property type="protein sequence ID" value="AAD48255.1"/>
    <property type="molecule type" value="mRNA"/>
</dbReference>
<dbReference type="EMBL" id="AF090002">
    <property type="protein sequence ID" value="AAD48256.1"/>
    <property type="molecule type" value="mRNA"/>
</dbReference>
<dbReference type="EMBL" id="AF090003">
    <property type="protein sequence ID" value="AAD48257.1"/>
    <property type="molecule type" value="mRNA"/>
</dbReference>
<dbReference type="EMBL" id="AF090004">
    <property type="protein sequence ID" value="AAD48258.1"/>
    <property type="molecule type" value="mRNA"/>
</dbReference>
<dbReference type="EMBL" id="AF090005">
    <property type="protein sequence ID" value="AAD48259.1"/>
    <property type="molecule type" value="mRNA"/>
</dbReference>
<dbReference type="EMBL" id="AF089996">
    <property type="protein sequence ID" value="AAD48250.1"/>
    <property type="molecule type" value="mRNA"/>
</dbReference>
<dbReference type="SMR" id="Q9TVX4"/>
<dbReference type="ConoServer" id="979">
    <property type="toxin name" value="ABVIG mutant 1 precursor"/>
</dbReference>
<dbReference type="ConoServer" id="972">
    <property type="toxin name" value="ABVIG precursor"/>
</dbReference>
<dbReference type="ConoServer" id="973">
    <property type="toxin name" value="ABVIG precursor"/>
</dbReference>
<dbReference type="ConoServer" id="980">
    <property type="toxin name" value="ABVIG precursor"/>
</dbReference>
<dbReference type="ConoServer" id="981">
    <property type="toxin name" value="ABVIG precursor"/>
</dbReference>
<dbReference type="GO" id="GO:0005576">
    <property type="term" value="C:extracellular region"/>
    <property type="evidence" value="ECO:0007669"/>
    <property type="project" value="UniProtKB-SubCell"/>
</dbReference>
<dbReference type="GO" id="GO:0008200">
    <property type="term" value="F:ion channel inhibitor activity"/>
    <property type="evidence" value="ECO:0007669"/>
    <property type="project" value="InterPro"/>
</dbReference>
<dbReference type="GO" id="GO:0090729">
    <property type="term" value="F:toxin activity"/>
    <property type="evidence" value="ECO:0007669"/>
    <property type="project" value="UniProtKB-KW"/>
</dbReference>
<dbReference type="InterPro" id="IPR004214">
    <property type="entry name" value="Conotoxin"/>
</dbReference>
<dbReference type="Pfam" id="PF02950">
    <property type="entry name" value="Conotoxin"/>
    <property type="match status" value="1"/>
</dbReference>
<evidence type="ECO:0000250" key="1"/>
<evidence type="ECO:0000255" key="2"/>
<evidence type="ECO:0000305" key="3"/>
<comment type="subcellular location">
    <subcellularLocation>
        <location evidence="1">Secreted</location>
    </subcellularLocation>
</comment>
<comment type="tissue specificity">
    <text>Expressed by the venom duct.</text>
</comment>
<comment type="domain">
    <text evidence="1">The presence of a 'disulfide through disulfide knot' structurally defines this protein as a knottin.</text>
</comment>
<comment type="domain">
    <text>The cysteine framework is VI/VII (C-C-CC-C-C).</text>
</comment>
<comment type="similarity">
    <text evidence="3">Belongs to the conotoxin O1 superfamily.</text>
</comment>
<accession>Q9TVX4</accession>
<accession>Q9UA87</accession>
<accession>Q9UA88</accession>
<accession>Q9UA89</accession>
<accession>Q9UA90</accession>
<keyword id="KW-0165">Cleavage on pair of basic residues</keyword>
<keyword id="KW-1015">Disulfide bond</keyword>
<keyword id="KW-0960">Knottin</keyword>
<keyword id="KW-0964">Secreted</keyword>
<keyword id="KW-0732">Signal</keyword>
<keyword id="KW-0800">Toxin</keyword>